<accession>P04122</accession>
<sequence length="181" mass="19889">TETTSFSITKFGPDQQNLIFQGDGYTTKERLTLTKAVRNTVGRALYSSPIHIWDSKTGNVANFVTSFTFVIDAPNSYNVADGFTFFIAPVDTKPQTGGGYLGVFNSKDYDKTSQTVAVEFDTFYNTAWDPSNGDRHIGIDVNSIKSINTKSWKLQNGKEANVVIAFNAATNVLTVSLTYPN</sequence>
<organism>
    <name type="scientific">Lathyrus ochrus</name>
    <name type="common">Cyprus-vetch</name>
    <name type="synonym">Pisum ochrus</name>
    <dbReference type="NCBI Taxonomy" id="3858"/>
    <lineage>
        <taxon>Eukaryota</taxon>
        <taxon>Viridiplantae</taxon>
        <taxon>Streptophyta</taxon>
        <taxon>Embryophyta</taxon>
        <taxon>Tracheophyta</taxon>
        <taxon>Spermatophyta</taxon>
        <taxon>Magnoliopsida</taxon>
        <taxon>eudicotyledons</taxon>
        <taxon>Gunneridae</taxon>
        <taxon>Pentapetalae</taxon>
        <taxon>rosids</taxon>
        <taxon>fabids</taxon>
        <taxon>Fabales</taxon>
        <taxon>Fabaceae</taxon>
        <taxon>Papilionoideae</taxon>
        <taxon>50 kb inversion clade</taxon>
        <taxon>NPAAA clade</taxon>
        <taxon>Hologalegina</taxon>
        <taxon>IRL clade</taxon>
        <taxon>Fabeae</taxon>
        <taxon>Lathyrus</taxon>
    </lineage>
</organism>
<proteinExistence type="evidence at protein level"/>
<feature type="chain" id="PRO_0000105104" description="Lectin beta-1 and beta-2 chains">
    <location>
        <begin position="1"/>
        <end position="181"/>
    </location>
</feature>
<feature type="binding site">
    <location>
        <position position="119"/>
    </location>
    <ligand>
        <name>Mn(2+)</name>
        <dbReference type="ChEBI" id="CHEBI:29035"/>
    </ligand>
</feature>
<feature type="binding site">
    <location>
        <position position="121"/>
    </location>
    <ligand>
        <name>Ca(2+)</name>
        <dbReference type="ChEBI" id="CHEBI:29108"/>
    </ligand>
</feature>
<feature type="binding site">
    <location>
        <position position="121"/>
    </location>
    <ligand>
        <name>Mn(2+)</name>
        <dbReference type="ChEBI" id="CHEBI:29035"/>
    </ligand>
</feature>
<feature type="binding site">
    <location>
        <position position="123"/>
    </location>
    <ligand>
        <name>Ca(2+)</name>
        <dbReference type="ChEBI" id="CHEBI:29108"/>
    </ligand>
</feature>
<feature type="binding site">
    <location>
        <position position="125"/>
    </location>
    <ligand>
        <name>Ca(2+)</name>
        <dbReference type="ChEBI" id="CHEBI:29108"/>
    </ligand>
</feature>
<feature type="binding site">
    <location>
        <position position="129"/>
    </location>
    <ligand>
        <name>Ca(2+)</name>
        <dbReference type="ChEBI" id="CHEBI:29108"/>
    </ligand>
</feature>
<feature type="binding site">
    <location>
        <position position="129"/>
    </location>
    <ligand>
        <name>Mn(2+)</name>
        <dbReference type="ChEBI" id="CHEBI:29035"/>
    </ligand>
</feature>
<feature type="binding site">
    <location>
        <position position="136"/>
    </location>
    <ligand>
        <name>Mn(2+)</name>
        <dbReference type="ChEBI" id="CHEBI:29035"/>
    </ligand>
</feature>
<feature type="sequence variant" description="In beta-2.">
    <original>Q</original>
    <variation>P</variation>
    <location>
        <position position="16"/>
    </location>
</feature>
<feature type="sequence variant" description="In beta-2.">
    <original>S</original>
    <variation>A</variation>
    <location>
        <position position="66"/>
    </location>
</feature>
<feature type="sequence variant" description="In beta-2.">
    <original>A</original>
    <variation>G</variation>
    <location>
        <position position="168"/>
    </location>
</feature>
<feature type="strand" evidence="2">
    <location>
        <begin position="2"/>
        <end position="10"/>
    </location>
</feature>
<feature type="strand" evidence="2">
    <location>
        <begin position="18"/>
        <end position="22"/>
    </location>
</feature>
<feature type="strand" evidence="2">
    <location>
        <begin position="25"/>
        <end position="27"/>
    </location>
</feature>
<feature type="strand" evidence="2">
    <location>
        <begin position="30"/>
        <end position="34"/>
    </location>
</feature>
<feature type="strand" evidence="2">
    <location>
        <begin position="41"/>
        <end position="48"/>
    </location>
</feature>
<feature type="turn" evidence="2">
    <location>
        <begin position="55"/>
        <end position="57"/>
    </location>
</feature>
<feature type="strand" evidence="2">
    <location>
        <begin position="62"/>
        <end position="72"/>
    </location>
</feature>
<feature type="strand" evidence="2">
    <location>
        <begin position="74"/>
        <end position="78"/>
    </location>
</feature>
<feature type="strand" evidence="2">
    <location>
        <begin position="82"/>
        <end position="89"/>
    </location>
</feature>
<feature type="helix" evidence="2">
    <location>
        <begin position="98"/>
        <end position="100"/>
    </location>
</feature>
<feature type="turn" evidence="2">
    <location>
        <begin position="101"/>
        <end position="103"/>
    </location>
</feature>
<feature type="helix" evidence="2">
    <location>
        <begin position="111"/>
        <end position="113"/>
    </location>
</feature>
<feature type="strand" evidence="2">
    <location>
        <begin position="116"/>
        <end position="121"/>
    </location>
</feature>
<feature type="turn" evidence="2">
    <location>
        <begin position="126"/>
        <end position="128"/>
    </location>
</feature>
<feature type="strand" evidence="2">
    <location>
        <begin position="136"/>
        <end position="145"/>
    </location>
</feature>
<feature type="strand" evidence="2">
    <location>
        <begin position="147"/>
        <end position="151"/>
    </location>
</feature>
<feature type="strand" evidence="2">
    <location>
        <begin position="159"/>
        <end position="167"/>
    </location>
</feature>
<feature type="turn" evidence="2">
    <location>
        <begin position="168"/>
        <end position="171"/>
    </location>
</feature>
<feature type="strand" evidence="2">
    <location>
        <begin position="172"/>
        <end position="178"/>
    </location>
</feature>
<comment type="subunit">
    <text>Tetramer of two alpha and two beta chains.</text>
</comment>
<comment type="interaction">
    <interactant intactId="EBI-9019549">
        <id>P04122</id>
    </interactant>
    <interactant intactId="EBI-16210416">
        <id>P12307</id>
    </interactant>
    <organismsDiffer>false</organismsDiffer>
    <experiments>2</experiments>
</comment>
<comment type="miscellaneous">
    <text>Binds one manganese (or another transition metal) ion and one calcium ion. The metal ions are essential for the saccharide-binding and cell-agglutinating activities.</text>
</comment>
<comment type="miscellaneous">
    <text>The sequence shown is that of the beta-1.</text>
</comment>
<comment type="similarity">
    <text evidence="1">Belongs to the leguminous lectin family.</text>
</comment>
<dbReference type="PIR" id="A05087">
    <property type="entry name" value="A05087"/>
</dbReference>
<dbReference type="PIR" id="A05088">
    <property type="entry name" value="A05088"/>
</dbReference>
<dbReference type="PDB" id="1LGB">
    <property type="method" value="X-ray"/>
    <property type="resolution" value="3.30 A"/>
    <property type="chains" value="A=1-181"/>
</dbReference>
<dbReference type="PDB" id="1LGC">
    <property type="method" value="X-ray"/>
    <property type="resolution" value="2.80 A"/>
    <property type="chains" value="A/C/E=1-181"/>
</dbReference>
<dbReference type="PDB" id="1LOA">
    <property type="method" value="X-ray"/>
    <property type="resolution" value="2.20 A"/>
    <property type="chains" value="A/C/E/G=1-181"/>
</dbReference>
<dbReference type="PDB" id="1LOB">
    <property type="method" value="X-ray"/>
    <property type="resolution" value="2.00 A"/>
    <property type="chains" value="A/C/E/G=1-181"/>
</dbReference>
<dbReference type="PDB" id="1LOC">
    <property type="method" value="X-ray"/>
    <property type="resolution" value="2.05 A"/>
    <property type="chains" value="A/C/E/G=1-181"/>
</dbReference>
<dbReference type="PDB" id="1LOD">
    <property type="method" value="X-ray"/>
    <property type="resolution" value="2.05 A"/>
    <property type="chains" value="A/C/E/G=1-181"/>
</dbReference>
<dbReference type="PDB" id="1LOE">
    <property type="method" value="X-ray"/>
    <property type="resolution" value="1.90 A"/>
    <property type="chains" value="A/C=1-181"/>
</dbReference>
<dbReference type="PDB" id="1LOF">
    <property type="method" value="X-ray"/>
    <property type="resolution" value="2.30 A"/>
    <property type="chains" value="A/C=1-181"/>
</dbReference>
<dbReference type="PDB" id="1LOG">
    <property type="method" value="X-ray"/>
    <property type="resolution" value="2.10 A"/>
    <property type="chains" value="A/C=1-181"/>
</dbReference>
<dbReference type="PDBsum" id="1LGB"/>
<dbReference type="PDBsum" id="1LGC"/>
<dbReference type="PDBsum" id="1LOA"/>
<dbReference type="PDBsum" id="1LOB"/>
<dbReference type="PDBsum" id="1LOC"/>
<dbReference type="PDBsum" id="1LOD"/>
<dbReference type="PDBsum" id="1LOE"/>
<dbReference type="PDBsum" id="1LOF"/>
<dbReference type="PDBsum" id="1LOG"/>
<dbReference type="SMR" id="P04122"/>
<dbReference type="DIP" id="DIP-6190N"/>
<dbReference type="IntAct" id="P04122">
    <property type="interactions" value="1"/>
</dbReference>
<dbReference type="Allergome" id="8817">
    <property type="allergen name" value="Lat oc Agglutinin"/>
</dbReference>
<dbReference type="UniLectin" id="P04122"/>
<dbReference type="EvolutionaryTrace" id="P04122"/>
<dbReference type="GO" id="GO:0005537">
    <property type="term" value="F:D-mannose binding"/>
    <property type="evidence" value="ECO:0007669"/>
    <property type="project" value="UniProtKB-KW"/>
</dbReference>
<dbReference type="GO" id="GO:0046872">
    <property type="term" value="F:metal ion binding"/>
    <property type="evidence" value="ECO:0007669"/>
    <property type="project" value="UniProtKB-KW"/>
</dbReference>
<dbReference type="CDD" id="cd06899">
    <property type="entry name" value="lectin_legume_LecRK_Arcelin_ConA"/>
    <property type="match status" value="1"/>
</dbReference>
<dbReference type="Gene3D" id="2.60.120.200">
    <property type="match status" value="1"/>
</dbReference>
<dbReference type="InterPro" id="IPR013320">
    <property type="entry name" value="ConA-like_dom_sf"/>
</dbReference>
<dbReference type="InterPro" id="IPR019825">
    <property type="entry name" value="Lectin_legB_Mn/Ca_BS"/>
</dbReference>
<dbReference type="InterPro" id="IPR001220">
    <property type="entry name" value="Legume_lectin_dom"/>
</dbReference>
<dbReference type="InterPro" id="IPR050258">
    <property type="entry name" value="Leguminous_Lectin"/>
</dbReference>
<dbReference type="PANTHER" id="PTHR32401">
    <property type="entry name" value="CONCANAVALIN A-LIKE LECTIN FAMILY PROTEIN"/>
    <property type="match status" value="1"/>
</dbReference>
<dbReference type="PANTHER" id="PTHR32401:SF45">
    <property type="entry name" value="LECTIN"/>
    <property type="match status" value="1"/>
</dbReference>
<dbReference type="Pfam" id="PF00139">
    <property type="entry name" value="Lectin_legB"/>
    <property type="match status" value="1"/>
</dbReference>
<dbReference type="SUPFAM" id="SSF49899">
    <property type="entry name" value="Concanavalin A-like lectins/glucanases"/>
    <property type="match status" value="1"/>
</dbReference>
<dbReference type="PROSITE" id="PS00307">
    <property type="entry name" value="LECTIN_LEGUME_BETA"/>
    <property type="match status" value="1"/>
</dbReference>
<reference key="1">
    <citation type="journal article" date="1985" name="FEBS Lett.">
        <title>The complete amino acid sequences of the beta-1- and beta-2-subunits of the isolectins LoL1 and LoL11 from seeds of Lathyrus ochrus (L.) DC.</title>
        <authorList>
            <person name="Yarwood A."/>
            <person name="Richardson M."/>
            <person name="Sousa-Cavada B."/>
            <person name="Rouge P."/>
        </authorList>
    </citation>
    <scope>PROTEIN SEQUENCE</scope>
</reference>
<reference key="2">
    <citation type="journal article" date="1990" name="J. Mol. Biol.">
        <title>X-ray crystal structure determination and refinement at 1.9-A resolution of isolectin I from the seeds of Lathyrus ochrus.</title>
        <authorList>
            <person name="Bourne Y."/>
            <person name="Abergel C."/>
            <person name="Cambillau C."/>
            <person name="Frey M."/>
            <person name="Rouge P."/>
            <person name="Fontecilla-Camps J.-C."/>
        </authorList>
    </citation>
    <scope>X-RAY CRYSTALLOGRAPHY (1.9 ANGSTROMS)</scope>
</reference>
<reference key="3">
    <citation type="journal article" date="1990" name="Proteins">
        <title>Three-dimensional structures of complexes of Lathyrus ochrus isolectin I with glucose and mannose: fine specificity of the monosaccharide-binding site.</title>
        <authorList>
            <person name="Bourne Y."/>
            <person name="Roussel A."/>
            <person name="Frey M."/>
            <person name="Rouge P."/>
            <person name="Fontecilla-Camps J.-C."/>
            <person name="Cambillau C."/>
        </authorList>
    </citation>
    <scope>X-RAY CRYSTALLOGRAPHY (1.9 ANGSTROMS)</scope>
</reference>
<name>LECB_LATOC</name>
<protein>
    <recommendedName>
        <fullName>Lectin beta-1 and beta-2 chains</fullName>
    </recommendedName>
</protein>
<keyword id="KW-0002">3D-structure</keyword>
<keyword id="KW-0106">Calcium</keyword>
<keyword id="KW-0903">Direct protein sequencing</keyword>
<keyword id="KW-0430">Lectin</keyword>
<keyword id="KW-0464">Manganese</keyword>
<keyword id="KW-0465">Mannose-binding</keyword>
<keyword id="KW-0479">Metal-binding</keyword>
<evidence type="ECO:0000305" key="1"/>
<evidence type="ECO:0007829" key="2">
    <source>
        <dbReference type="PDB" id="1LOE"/>
    </source>
</evidence>